<evidence type="ECO:0000255" key="1">
    <source>
        <dbReference type="HAMAP-Rule" id="MF_00086"/>
    </source>
</evidence>
<gene>
    <name evidence="1" type="primary">metK</name>
    <name type="ordered locus">RSc0134</name>
    <name type="ORF">RS01004</name>
</gene>
<comment type="function">
    <text evidence="1">Catalyzes the formation of S-adenosylmethionine (AdoMet) from methionine and ATP. The overall synthetic reaction is composed of two sequential steps, AdoMet formation and the subsequent tripolyphosphate hydrolysis which occurs prior to release of AdoMet from the enzyme.</text>
</comment>
<comment type="catalytic activity">
    <reaction evidence="1">
        <text>L-methionine + ATP + H2O = S-adenosyl-L-methionine + phosphate + diphosphate</text>
        <dbReference type="Rhea" id="RHEA:21080"/>
        <dbReference type="ChEBI" id="CHEBI:15377"/>
        <dbReference type="ChEBI" id="CHEBI:30616"/>
        <dbReference type="ChEBI" id="CHEBI:33019"/>
        <dbReference type="ChEBI" id="CHEBI:43474"/>
        <dbReference type="ChEBI" id="CHEBI:57844"/>
        <dbReference type="ChEBI" id="CHEBI:59789"/>
        <dbReference type="EC" id="2.5.1.6"/>
    </reaction>
</comment>
<comment type="cofactor">
    <cofactor evidence="1">
        <name>Mg(2+)</name>
        <dbReference type="ChEBI" id="CHEBI:18420"/>
    </cofactor>
    <text evidence="1">Binds 2 divalent ions per subunit.</text>
</comment>
<comment type="cofactor">
    <cofactor evidence="1">
        <name>K(+)</name>
        <dbReference type="ChEBI" id="CHEBI:29103"/>
    </cofactor>
    <text evidence="1">Binds 1 potassium ion per subunit.</text>
</comment>
<comment type="pathway">
    <text evidence="1">Amino-acid biosynthesis; S-adenosyl-L-methionine biosynthesis; S-adenosyl-L-methionine from L-methionine: step 1/1.</text>
</comment>
<comment type="subunit">
    <text evidence="1">Homotetramer; dimer of dimers.</text>
</comment>
<comment type="subcellular location">
    <subcellularLocation>
        <location evidence="1">Cytoplasm</location>
    </subcellularLocation>
</comment>
<comment type="similarity">
    <text evidence="1">Belongs to the AdoMet synthase family.</text>
</comment>
<accession>Q8Y347</accession>
<feature type="chain" id="PRO_0000174575" description="S-adenosylmethionine synthase">
    <location>
        <begin position="1"/>
        <end position="396"/>
    </location>
</feature>
<feature type="region of interest" description="Flexible loop" evidence="1">
    <location>
        <begin position="100"/>
        <end position="110"/>
    </location>
</feature>
<feature type="binding site" description="in other chain" evidence="1">
    <location>
        <position position="16"/>
    </location>
    <ligand>
        <name>ATP</name>
        <dbReference type="ChEBI" id="CHEBI:30616"/>
        <note>ligand shared between two neighboring subunits</note>
    </ligand>
</feature>
<feature type="binding site" evidence="1">
    <location>
        <position position="18"/>
    </location>
    <ligand>
        <name>Mg(2+)</name>
        <dbReference type="ChEBI" id="CHEBI:18420"/>
    </ligand>
</feature>
<feature type="binding site" evidence="1">
    <location>
        <position position="44"/>
    </location>
    <ligand>
        <name>K(+)</name>
        <dbReference type="ChEBI" id="CHEBI:29103"/>
    </ligand>
</feature>
<feature type="binding site" description="in other chain" evidence="1">
    <location>
        <position position="57"/>
    </location>
    <ligand>
        <name>L-methionine</name>
        <dbReference type="ChEBI" id="CHEBI:57844"/>
        <note>ligand shared between two neighboring subunits</note>
    </ligand>
</feature>
<feature type="binding site" description="in other chain" evidence="1">
    <location>
        <position position="100"/>
    </location>
    <ligand>
        <name>L-methionine</name>
        <dbReference type="ChEBI" id="CHEBI:57844"/>
        <note>ligand shared between two neighboring subunits</note>
    </ligand>
</feature>
<feature type="binding site" description="in other chain" evidence="1">
    <location>
        <begin position="167"/>
        <end position="169"/>
    </location>
    <ligand>
        <name>ATP</name>
        <dbReference type="ChEBI" id="CHEBI:30616"/>
        <note>ligand shared between two neighboring subunits</note>
    </ligand>
</feature>
<feature type="binding site" description="in other chain" evidence="1">
    <location>
        <begin position="232"/>
        <end position="233"/>
    </location>
    <ligand>
        <name>ATP</name>
        <dbReference type="ChEBI" id="CHEBI:30616"/>
        <note>ligand shared between two neighboring subunits</note>
    </ligand>
</feature>
<feature type="binding site" evidence="1">
    <location>
        <position position="241"/>
    </location>
    <ligand>
        <name>ATP</name>
        <dbReference type="ChEBI" id="CHEBI:30616"/>
        <note>ligand shared between two neighboring subunits</note>
    </ligand>
</feature>
<feature type="binding site" evidence="1">
    <location>
        <position position="241"/>
    </location>
    <ligand>
        <name>L-methionine</name>
        <dbReference type="ChEBI" id="CHEBI:57844"/>
        <note>ligand shared between two neighboring subunits</note>
    </ligand>
</feature>
<feature type="binding site" description="in other chain" evidence="1">
    <location>
        <begin position="247"/>
        <end position="248"/>
    </location>
    <ligand>
        <name>ATP</name>
        <dbReference type="ChEBI" id="CHEBI:30616"/>
        <note>ligand shared between two neighboring subunits</note>
    </ligand>
</feature>
<feature type="binding site" evidence="1">
    <location>
        <position position="264"/>
    </location>
    <ligand>
        <name>ATP</name>
        <dbReference type="ChEBI" id="CHEBI:30616"/>
        <note>ligand shared between two neighboring subunits</note>
    </ligand>
</feature>
<feature type="binding site" evidence="1">
    <location>
        <position position="268"/>
    </location>
    <ligand>
        <name>ATP</name>
        <dbReference type="ChEBI" id="CHEBI:30616"/>
        <note>ligand shared between two neighboring subunits</note>
    </ligand>
</feature>
<feature type="binding site" description="in other chain" evidence="1">
    <location>
        <position position="272"/>
    </location>
    <ligand>
        <name>L-methionine</name>
        <dbReference type="ChEBI" id="CHEBI:57844"/>
        <note>ligand shared between two neighboring subunits</note>
    </ligand>
</feature>
<organism>
    <name type="scientific">Ralstonia nicotianae (strain ATCC BAA-1114 / GMI1000)</name>
    <name type="common">Ralstonia solanacearum</name>
    <dbReference type="NCBI Taxonomy" id="267608"/>
    <lineage>
        <taxon>Bacteria</taxon>
        <taxon>Pseudomonadati</taxon>
        <taxon>Pseudomonadota</taxon>
        <taxon>Betaproteobacteria</taxon>
        <taxon>Burkholderiales</taxon>
        <taxon>Burkholderiaceae</taxon>
        <taxon>Ralstonia</taxon>
        <taxon>Ralstonia solanacearum species complex</taxon>
    </lineage>
</organism>
<proteinExistence type="inferred from homology"/>
<reference key="1">
    <citation type="journal article" date="2002" name="Nature">
        <title>Genome sequence of the plant pathogen Ralstonia solanacearum.</title>
        <authorList>
            <person name="Salanoubat M."/>
            <person name="Genin S."/>
            <person name="Artiguenave F."/>
            <person name="Gouzy J."/>
            <person name="Mangenot S."/>
            <person name="Arlat M."/>
            <person name="Billault A."/>
            <person name="Brottier P."/>
            <person name="Camus J.-C."/>
            <person name="Cattolico L."/>
            <person name="Chandler M."/>
            <person name="Choisne N."/>
            <person name="Claudel-Renard C."/>
            <person name="Cunnac S."/>
            <person name="Demange N."/>
            <person name="Gaspin C."/>
            <person name="Lavie M."/>
            <person name="Moisan A."/>
            <person name="Robert C."/>
            <person name="Saurin W."/>
            <person name="Schiex T."/>
            <person name="Siguier P."/>
            <person name="Thebault P."/>
            <person name="Whalen M."/>
            <person name="Wincker P."/>
            <person name="Levy M."/>
            <person name="Weissenbach J."/>
            <person name="Boucher C.A."/>
        </authorList>
    </citation>
    <scope>NUCLEOTIDE SEQUENCE [LARGE SCALE GENOMIC DNA]</scope>
    <source>
        <strain>ATCC BAA-1114 / GMI1000</strain>
    </source>
</reference>
<sequence>MSNDFLFTSESVSEGHPDKVADQISDAILDAILAQDKYARVAAETLCNTGLVVLAGEITTSANVDYIHVARETIKRIGYDNTDYGIDYKGCAVLVAYDKQSPDIAQGVDRASDDYLNQGAGDQGLMFGYACDETPELMPFPIYYAHRLVERQSQLRRDGRLPWLRPDAKSQVTVRYVNGKPHSVDTVVLSTQHAPEISQEQIREAVIEEIIKPVLPSHMLAETKYLVNPTGRFVIGGPQGDCGLTGRKIIVDTYGGAAPHGGGAFSGKDPSKVDRSAAYAARYVAKNVVAAGLARQCQVQVSYAIGVARPINITVYTEGTGVIPDEQIAKLVQEHFDLRPKGIVQMLDLLRPIYGKTAAYGHFGREEPEFSWEATDKAQLLREAAGLAGEPVKAFA</sequence>
<dbReference type="EC" id="2.5.1.6" evidence="1"/>
<dbReference type="EMBL" id="AL646052">
    <property type="protein sequence ID" value="CAD13662.1"/>
    <property type="molecule type" value="Genomic_DNA"/>
</dbReference>
<dbReference type="RefSeq" id="WP_011000101.1">
    <property type="nucleotide sequence ID" value="NC_003295.1"/>
</dbReference>
<dbReference type="SMR" id="Q8Y347"/>
<dbReference type="STRING" id="267608.RSc0134"/>
<dbReference type="EnsemblBacteria" id="CAD13662">
    <property type="protein sequence ID" value="CAD13662"/>
    <property type="gene ID" value="RSc0134"/>
</dbReference>
<dbReference type="KEGG" id="rso:RSc0134"/>
<dbReference type="eggNOG" id="COG0192">
    <property type="taxonomic scope" value="Bacteria"/>
</dbReference>
<dbReference type="HOGENOM" id="CLU_041802_1_1_4"/>
<dbReference type="UniPathway" id="UPA00315">
    <property type="reaction ID" value="UER00080"/>
</dbReference>
<dbReference type="Proteomes" id="UP000001436">
    <property type="component" value="Chromosome"/>
</dbReference>
<dbReference type="GO" id="GO:0005737">
    <property type="term" value="C:cytoplasm"/>
    <property type="evidence" value="ECO:0007669"/>
    <property type="project" value="UniProtKB-SubCell"/>
</dbReference>
<dbReference type="GO" id="GO:0005524">
    <property type="term" value="F:ATP binding"/>
    <property type="evidence" value="ECO:0007669"/>
    <property type="project" value="UniProtKB-UniRule"/>
</dbReference>
<dbReference type="GO" id="GO:0000287">
    <property type="term" value="F:magnesium ion binding"/>
    <property type="evidence" value="ECO:0007669"/>
    <property type="project" value="UniProtKB-UniRule"/>
</dbReference>
<dbReference type="GO" id="GO:0004478">
    <property type="term" value="F:methionine adenosyltransferase activity"/>
    <property type="evidence" value="ECO:0007669"/>
    <property type="project" value="UniProtKB-UniRule"/>
</dbReference>
<dbReference type="GO" id="GO:0006730">
    <property type="term" value="P:one-carbon metabolic process"/>
    <property type="evidence" value="ECO:0007669"/>
    <property type="project" value="UniProtKB-KW"/>
</dbReference>
<dbReference type="GO" id="GO:0006556">
    <property type="term" value="P:S-adenosylmethionine biosynthetic process"/>
    <property type="evidence" value="ECO:0007669"/>
    <property type="project" value="UniProtKB-UniRule"/>
</dbReference>
<dbReference type="CDD" id="cd18079">
    <property type="entry name" value="S-AdoMet_synt"/>
    <property type="match status" value="1"/>
</dbReference>
<dbReference type="FunFam" id="3.30.300.10:FF:000003">
    <property type="entry name" value="S-adenosylmethionine synthase"/>
    <property type="match status" value="1"/>
</dbReference>
<dbReference type="FunFam" id="3.30.300.10:FF:000004">
    <property type="entry name" value="S-adenosylmethionine synthase"/>
    <property type="match status" value="1"/>
</dbReference>
<dbReference type="Gene3D" id="3.30.300.10">
    <property type="match status" value="3"/>
</dbReference>
<dbReference type="HAMAP" id="MF_00086">
    <property type="entry name" value="S_AdoMet_synth1"/>
    <property type="match status" value="1"/>
</dbReference>
<dbReference type="InterPro" id="IPR022631">
    <property type="entry name" value="ADOMET_SYNTHASE_CS"/>
</dbReference>
<dbReference type="InterPro" id="IPR022630">
    <property type="entry name" value="S-AdoMet_synt_C"/>
</dbReference>
<dbReference type="InterPro" id="IPR022629">
    <property type="entry name" value="S-AdoMet_synt_central"/>
</dbReference>
<dbReference type="InterPro" id="IPR022628">
    <property type="entry name" value="S-AdoMet_synt_N"/>
</dbReference>
<dbReference type="InterPro" id="IPR002133">
    <property type="entry name" value="S-AdoMet_synthetase"/>
</dbReference>
<dbReference type="InterPro" id="IPR022636">
    <property type="entry name" value="S-AdoMet_synthetase_sfam"/>
</dbReference>
<dbReference type="NCBIfam" id="TIGR01034">
    <property type="entry name" value="metK"/>
    <property type="match status" value="1"/>
</dbReference>
<dbReference type="PANTHER" id="PTHR11964">
    <property type="entry name" value="S-ADENOSYLMETHIONINE SYNTHETASE"/>
    <property type="match status" value="1"/>
</dbReference>
<dbReference type="Pfam" id="PF02773">
    <property type="entry name" value="S-AdoMet_synt_C"/>
    <property type="match status" value="1"/>
</dbReference>
<dbReference type="Pfam" id="PF02772">
    <property type="entry name" value="S-AdoMet_synt_M"/>
    <property type="match status" value="1"/>
</dbReference>
<dbReference type="Pfam" id="PF00438">
    <property type="entry name" value="S-AdoMet_synt_N"/>
    <property type="match status" value="1"/>
</dbReference>
<dbReference type="PIRSF" id="PIRSF000497">
    <property type="entry name" value="MAT"/>
    <property type="match status" value="1"/>
</dbReference>
<dbReference type="SUPFAM" id="SSF55973">
    <property type="entry name" value="S-adenosylmethionine synthetase"/>
    <property type="match status" value="3"/>
</dbReference>
<dbReference type="PROSITE" id="PS00376">
    <property type="entry name" value="ADOMET_SYNTHASE_1"/>
    <property type="match status" value="1"/>
</dbReference>
<dbReference type="PROSITE" id="PS00377">
    <property type="entry name" value="ADOMET_SYNTHASE_2"/>
    <property type="match status" value="1"/>
</dbReference>
<keyword id="KW-0067">ATP-binding</keyword>
<keyword id="KW-0963">Cytoplasm</keyword>
<keyword id="KW-0460">Magnesium</keyword>
<keyword id="KW-0479">Metal-binding</keyword>
<keyword id="KW-0547">Nucleotide-binding</keyword>
<keyword id="KW-0554">One-carbon metabolism</keyword>
<keyword id="KW-0630">Potassium</keyword>
<keyword id="KW-1185">Reference proteome</keyword>
<keyword id="KW-0808">Transferase</keyword>
<protein>
    <recommendedName>
        <fullName evidence="1">S-adenosylmethionine synthase</fullName>
        <shortName evidence="1">AdoMet synthase</shortName>
        <ecNumber evidence="1">2.5.1.6</ecNumber>
    </recommendedName>
    <alternativeName>
        <fullName evidence="1">MAT</fullName>
    </alternativeName>
    <alternativeName>
        <fullName evidence="1">Methionine adenosyltransferase</fullName>
    </alternativeName>
</protein>
<name>METK_RALN1</name>